<keyword id="KW-0378">Hydrolase</keyword>
<keyword id="KW-0460">Magnesium</keyword>
<keyword id="KW-0479">Metal-binding</keyword>
<keyword id="KW-1185">Reference proteome</keyword>
<accession>Q89E06</accession>
<feature type="chain" id="PRO_0000439912" description="Cyanuric acid amidohydrolase">
    <location>
        <begin position="1"/>
        <end position="370"/>
    </location>
</feature>
<feature type="region of interest" description="RU A" evidence="2">
    <location>
        <begin position="1"/>
        <end position="106"/>
    </location>
</feature>
<feature type="region of interest" description="RU B" evidence="2">
    <location>
        <begin position="115"/>
        <end position="251"/>
    </location>
</feature>
<feature type="region of interest" description="RU C" evidence="2">
    <location>
        <begin position="257"/>
        <end position="370"/>
    </location>
</feature>
<feature type="active site" evidence="2">
    <location>
        <position position="165"/>
    </location>
</feature>
<feature type="active site" description="Nucleophile" evidence="2">
    <location>
        <position position="234"/>
    </location>
</feature>
<feature type="binding site" evidence="2">
    <location>
        <position position="54"/>
    </location>
    <ligand>
        <name>substrate</name>
    </ligand>
</feature>
<feature type="binding site" evidence="2">
    <location>
        <begin position="85"/>
        <end position="86"/>
    </location>
    <ligand>
        <name>substrate</name>
    </ligand>
</feature>
<feature type="binding site" evidence="2">
    <location>
        <position position="197"/>
    </location>
    <ligand>
        <name>substrate</name>
    </ligand>
</feature>
<feature type="binding site" evidence="2">
    <location>
        <begin position="234"/>
        <end position="235"/>
    </location>
    <ligand>
        <name>substrate</name>
    </ligand>
</feature>
<feature type="binding site" evidence="2">
    <location>
        <position position="302"/>
    </location>
    <ligand>
        <name>Mg(2+)</name>
        <dbReference type="ChEBI" id="CHEBI:18420"/>
        <note>structural</note>
    </ligand>
</feature>
<feature type="binding site" evidence="2">
    <location>
        <position position="329"/>
    </location>
    <ligand>
        <name>substrate</name>
    </ligand>
</feature>
<feature type="binding site" evidence="2">
    <location>
        <begin position="348"/>
        <end position="349"/>
    </location>
    <ligand>
        <name>substrate</name>
    </ligand>
</feature>
<feature type="binding site" evidence="2">
    <location>
        <position position="351"/>
    </location>
    <ligand>
        <name>Mg(2+)</name>
        <dbReference type="ChEBI" id="CHEBI:18420"/>
        <note>structural</note>
    </ligand>
</feature>
<feature type="binding site" evidence="2">
    <location>
        <position position="354"/>
    </location>
    <ligand>
        <name>Mg(2+)</name>
        <dbReference type="ChEBI" id="CHEBI:18420"/>
        <note>structural</note>
    </ligand>
</feature>
<feature type="binding site" evidence="2">
    <location>
        <position position="355"/>
    </location>
    <ligand>
        <name>Mg(2+)</name>
        <dbReference type="ChEBI" id="CHEBI:18420"/>
        <note>structural</note>
    </ligand>
</feature>
<feature type="binding site" evidence="2">
    <location>
        <position position="356"/>
    </location>
    <ligand>
        <name>Mg(2+)</name>
        <dbReference type="ChEBI" id="CHEBI:18420"/>
        <note>structural</note>
    </ligand>
</feature>
<feature type="binding site" evidence="2">
    <location>
        <position position="359"/>
    </location>
    <ligand>
        <name>Mg(2+)</name>
        <dbReference type="ChEBI" id="CHEBI:18420"/>
        <note>structural</note>
    </ligand>
</feature>
<feature type="site" description="Important for substrate specificity" evidence="2">
    <location>
        <position position="325"/>
    </location>
</feature>
<organism>
    <name type="scientific">Bradyrhizobium diazoefficiens (strain JCM 10833 / BCRC 13528 / IAM 13628 / NBRC 14792 / USDA 110)</name>
    <dbReference type="NCBI Taxonomy" id="224911"/>
    <lineage>
        <taxon>Bacteria</taxon>
        <taxon>Pseudomonadati</taxon>
        <taxon>Pseudomonadota</taxon>
        <taxon>Alphaproteobacteria</taxon>
        <taxon>Hyphomicrobiales</taxon>
        <taxon>Nitrobacteraceae</taxon>
        <taxon>Bradyrhizobium</taxon>
    </lineage>
</organism>
<reference key="1">
    <citation type="journal article" date="2002" name="DNA Res.">
        <title>Complete genomic sequence of nitrogen-fixing symbiotic bacterium Bradyrhizobium japonicum USDA110.</title>
        <authorList>
            <person name="Kaneko T."/>
            <person name="Nakamura Y."/>
            <person name="Sato S."/>
            <person name="Minamisawa K."/>
            <person name="Uchiumi T."/>
            <person name="Sasamoto S."/>
            <person name="Watanabe A."/>
            <person name="Idesawa K."/>
            <person name="Iriguchi M."/>
            <person name="Kawashima K."/>
            <person name="Kohara M."/>
            <person name="Matsumoto M."/>
            <person name="Shimpo S."/>
            <person name="Tsuruoka H."/>
            <person name="Wada T."/>
            <person name="Yamada M."/>
            <person name="Tabata S."/>
        </authorList>
    </citation>
    <scope>NUCLEOTIDE SEQUENCE [LARGE SCALE GENOMIC DNA]</scope>
    <source>
        <strain>JCM 10833 / BCRC 13528 / IAM 13628 / NBRC 14792 / USDA 110</strain>
    </source>
</reference>
<reference key="2">
    <citation type="journal article" date="2012" name="J. Bacteriol.">
        <title>Defining sequence space and reaction products within the cyanuric acid hydrolase (AtzD)/barbiturase protein family.</title>
        <authorList>
            <person name="Seffernick J.L."/>
            <person name="Erickson J.S."/>
            <person name="Cameron S.M."/>
            <person name="Cho S."/>
            <person name="Dodge A.G."/>
            <person name="Richman J.E."/>
            <person name="Sadowsky M.J."/>
            <person name="Wackett L.P."/>
        </authorList>
    </citation>
    <scope>FUNCTION</scope>
    <scope>CATALYTIC ACTIVITY</scope>
    <scope>BIOPHYSICOCHEMICAL PROPERTIES</scope>
</reference>
<comment type="function">
    <text evidence="2 3">Responsible for the hydrolysis of cyanuric acid, an intermediate formed during catabolism of s-triazine based compounds in herbicides such as atrazine and polymers such as melamine. Catalyzes the hydrolytic opening of the s-triazine ring of cyanuric acid (2,4,6-trihydroxy-s-triazine) to yield carbon dioxide and carboxybiuret, which spontaneously decarboxylates to biuret.</text>
</comment>
<comment type="catalytic activity">
    <reaction evidence="2 3">
        <text>cyanurate + H2O = 1-carboxybiuret + H(+)</text>
        <dbReference type="Rhea" id="RHEA:70363"/>
        <dbReference type="ChEBI" id="CHEBI:15377"/>
        <dbReference type="ChEBI" id="CHEBI:15378"/>
        <dbReference type="ChEBI" id="CHEBI:38028"/>
        <dbReference type="ChEBI" id="CHEBI:142864"/>
        <dbReference type="EC" id="3.5.2.15"/>
    </reaction>
</comment>
<comment type="activity regulation">
    <text evidence="1 2">Inhibited by barbituric acid.</text>
</comment>
<comment type="biophysicochemical properties">
    <kinetics>
        <KM evidence="3">50 uM for cyanuric acid</KM>
        <text evidence="3">kcat is 9.3 sec(-1) with cyanuric acid as substrate.</text>
    </kinetics>
</comment>
<comment type="pathway">
    <text evidence="2">Xenobiotic degradation; atrazine degradation; biuret from cyanurate: step 1/1.</text>
</comment>
<comment type="subunit">
    <text evidence="1 2">Homotetramer.</text>
</comment>
<comment type="domain">
    <text evidence="2">The monomer structure is formed from three repeating units (RUs) that share the same structure as one another. The monomer, the active site and substrate all possess threefold rotational symmetry, to the extent that the active site possesses three potential Ser-Lys catalytic dyads. It is possible that any or all of the three active-site serines may act as nucleophile (albeit only one can do so per catalytic cycle).</text>
</comment>
<comment type="similarity">
    <text evidence="2 4">Belongs to the cyclic amide hydrolase (CyAH) family.</text>
</comment>
<dbReference type="EC" id="3.5.2.15" evidence="2 3"/>
<dbReference type="EMBL" id="BA000040">
    <property type="protein sequence ID" value="BAC52546.1"/>
    <property type="molecule type" value="Genomic_DNA"/>
</dbReference>
<dbReference type="RefSeq" id="NP_773921.1">
    <property type="nucleotide sequence ID" value="NC_004463.1"/>
</dbReference>
<dbReference type="RefSeq" id="WP_011090016.1">
    <property type="nucleotide sequence ID" value="NC_004463.1"/>
</dbReference>
<dbReference type="SMR" id="Q89E06"/>
<dbReference type="STRING" id="224911.AAV28_34065"/>
<dbReference type="EnsemblBacteria" id="BAC52546">
    <property type="protein sequence ID" value="BAC52546"/>
    <property type="gene ID" value="BAC52546"/>
</dbReference>
<dbReference type="GeneID" id="46494240"/>
<dbReference type="KEGG" id="bja:blr7281"/>
<dbReference type="PATRIC" id="fig|224911.44.peg.7354"/>
<dbReference type="eggNOG" id="ENOG502Z8BS">
    <property type="taxonomic scope" value="Bacteria"/>
</dbReference>
<dbReference type="HOGENOM" id="CLU_808206_0_0_5"/>
<dbReference type="InParanoid" id="Q89E06"/>
<dbReference type="OrthoDB" id="569708at2"/>
<dbReference type="SABIO-RK" id="Q89E06"/>
<dbReference type="UniPathway" id="UPA00008">
    <property type="reaction ID" value="UER00502"/>
</dbReference>
<dbReference type="Proteomes" id="UP000002526">
    <property type="component" value="Chromosome"/>
</dbReference>
<dbReference type="GO" id="GO:0018753">
    <property type="term" value="F:cyanuric acid amidohydrolase activity"/>
    <property type="evidence" value="ECO:0007669"/>
    <property type="project" value="UniProtKB-UniRule"/>
</dbReference>
<dbReference type="GO" id="GO:0046872">
    <property type="term" value="F:metal ion binding"/>
    <property type="evidence" value="ECO:0007669"/>
    <property type="project" value="UniProtKB-UniRule"/>
</dbReference>
<dbReference type="GO" id="GO:0019381">
    <property type="term" value="P:atrazine catabolic process"/>
    <property type="evidence" value="ECO:0007669"/>
    <property type="project" value="UniProtKB-UniRule"/>
</dbReference>
<dbReference type="Gene3D" id="3.30.1330.160">
    <property type="entry name" value="Cyanuric acid hydrolase/Barbituras, RU C"/>
    <property type="match status" value="1"/>
</dbReference>
<dbReference type="Gene3D" id="3.30.1330.170">
    <property type="entry name" value="Cyanuric acid hydrolase/Barbiturase, RU A"/>
    <property type="match status" value="1"/>
</dbReference>
<dbReference type="Gene3D" id="3.30.1330.180">
    <property type="entry name" value="Cyanuric acid hydrolase/Barbiturase, RU B"/>
    <property type="match status" value="1"/>
</dbReference>
<dbReference type="HAMAP" id="MF_01989">
    <property type="entry name" value="Cyc_amidohydrol"/>
    <property type="match status" value="1"/>
</dbReference>
<dbReference type="InterPro" id="IPR014086">
    <property type="entry name" value="AtzD/Barbiturase"/>
</dbReference>
<dbReference type="InterPro" id="IPR043008">
    <property type="entry name" value="AtzD/Barbiturase_RUA"/>
</dbReference>
<dbReference type="InterPro" id="IPR043006">
    <property type="entry name" value="AtzD/Barbiturase_RUB"/>
</dbReference>
<dbReference type="InterPro" id="IPR043007">
    <property type="entry name" value="AtzD/Barbiturase_RUC"/>
</dbReference>
<dbReference type="NCBIfam" id="TIGR02714">
    <property type="entry name" value="amido_AtzD_TrzD"/>
    <property type="match status" value="1"/>
</dbReference>
<dbReference type="Pfam" id="PF09663">
    <property type="entry name" value="Amido_AtzD_TrzD"/>
    <property type="match status" value="1"/>
</dbReference>
<sequence length="370" mass="37572">MRTTSVGVFKIVTKGPGDVSGLMAMIGSGAIDPKSILAVLGKTEGNGGVNDFTREYAVAALCTALAPQLGLSPEEVEQRIAFVMSGGTEGVLSPHITVFTRREVERRPAGLSGKRLSIGMAHTRDFLPEELGRAAQIAETAAAVKAAMADAGIADPADVHFVQIKCPLLTSDRVEAASARGNKTATTSAYGSMAYSRGASALGVAVALGETGSDISDGDVLRRYDLFSKVASTSAGIELMHNVVIVLGNSAASASEFEIGHAVMNDAIDAAAVTSALKCVGLGVAPQAEAGRELVNIFAKAEASPDGSVRGFRHTMLEDTDISSTRHARAAVGGLIAGLAGTGAVYVSGGAEHQGPAGGGPVAVIARLSD</sequence>
<proteinExistence type="evidence at protein level"/>
<protein>
    <recommendedName>
        <fullName evidence="2">Cyanuric acid amidohydrolase</fullName>
        <shortName evidence="2">CAH</shortName>
        <ecNumber evidence="2 3">3.5.2.15</ecNumber>
    </recommendedName>
</protein>
<gene>
    <name type="ordered locus">blr7281</name>
</gene>
<name>CAH_BRADU</name>
<evidence type="ECO:0000250" key="1">
    <source>
        <dbReference type="UniProtKB" id="P58329"/>
    </source>
</evidence>
<evidence type="ECO:0000255" key="2">
    <source>
        <dbReference type="HAMAP-Rule" id="MF_01989"/>
    </source>
</evidence>
<evidence type="ECO:0000269" key="3">
    <source>
    </source>
</evidence>
<evidence type="ECO:0000305" key="4"/>